<evidence type="ECO:0000269" key="1">
    <source>
    </source>
</evidence>
<evidence type="ECO:0000269" key="2">
    <source>
    </source>
</evidence>
<evidence type="ECO:0000303" key="3">
    <source>
    </source>
</evidence>
<evidence type="ECO:0000305" key="4"/>
<evidence type="ECO:0000305" key="5">
    <source>
    </source>
</evidence>
<organismHost>
    <name type="scientific">Escherichia coli</name>
    <dbReference type="NCBI Taxonomy" id="562"/>
</organismHost>
<name>TERS_BPT7</name>
<protein>
    <recommendedName>
        <fullName>Terminase, small subunit gp18</fullName>
    </recommendedName>
    <alternativeName>
        <fullName>DNA-packaging protein A</fullName>
    </alternativeName>
    <alternativeName>
        <fullName>Gene product 18</fullName>
        <shortName>Gp18</shortName>
    </alternativeName>
</protein>
<organism>
    <name type="scientific">Escherichia phage T7</name>
    <name type="common">Bacteriophage T7</name>
    <dbReference type="NCBI Taxonomy" id="10760"/>
    <lineage>
        <taxon>Viruses</taxon>
        <taxon>Duplodnaviria</taxon>
        <taxon>Heunggongvirae</taxon>
        <taxon>Uroviricota</taxon>
        <taxon>Caudoviricetes</taxon>
        <taxon>Autographiviridae</taxon>
        <taxon>Studiervirinae</taxon>
        <taxon>Teseptimavirus</taxon>
        <taxon>Teseptimavirus T7</taxon>
    </lineage>
</organism>
<feature type="chain" id="PRO_0000106535" description="Terminase, small subunit gp18">
    <location>
        <begin position="1"/>
        <end position="89"/>
    </location>
</feature>
<feature type="region of interest" description="Helix-turn-helix (HTH)" evidence="5">
    <location>
        <begin position="1"/>
        <end position="48"/>
    </location>
</feature>
<dbReference type="EMBL" id="V01146">
    <property type="protein sequence ID" value="CAA24437.1"/>
    <property type="molecule type" value="Genomic_DNA"/>
</dbReference>
<dbReference type="PIR" id="A04315">
    <property type="entry name" value="JVBPA7"/>
</dbReference>
<dbReference type="RefSeq" id="NP_042007.1">
    <property type="nucleotide sequence ID" value="NC_001604.1"/>
</dbReference>
<dbReference type="KEGG" id="vg:1261042"/>
<dbReference type="OrthoDB" id="24629at10239"/>
<dbReference type="Proteomes" id="UP000000840">
    <property type="component" value="Genome"/>
</dbReference>
<dbReference type="GO" id="GO:0003677">
    <property type="term" value="F:DNA binding"/>
    <property type="evidence" value="ECO:0007669"/>
    <property type="project" value="UniProtKB-KW"/>
</dbReference>
<dbReference type="InterPro" id="IPR024345">
    <property type="entry name" value="DNA_matur_Phage_T7-like"/>
</dbReference>
<dbReference type="Pfam" id="PF11123">
    <property type="entry name" value="DNA_Packaging_2"/>
    <property type="match status" value="1"/>
</dbReference>
<reference key="1">
    <citation type="journal article" date="1983" name="J. Mol. Biol.">
        <title>Complete nucleotide sequence of bacteriophage T7 DNA and the locations of T7 genetic elements.</title>
        <authorList>
            <person name="Dunn J.J."/>
            <person name="Studier F.W."/>
        </authorList>
    </citation>
    <scope>NUCLEOTIDE SEQUENCE [LARGE SCALE GENOMIC DNA]</scope>
</reference>
<reference key="2">
    <citation type="journal article" date="1987" name="J. Biol. Chem.">
        <title>Gene 18 protein of bacteriophage T7. Overproduction, purification, and characterization.</title>
        <authorList>
            <person name="White J.H."/>
            <person name="Richardson C.C."/>
        </authorList>
    </citation>
    <scope>SUBUNIT</scope>
</reference>
<reference key="3">
    <citation type="journal article" date="1987" name="J. Biol. Chem.">
        <title>Processing of concatemers of bacteriophage T7 DNA in vitro.</title>
        <authorList>
            <person name="White J.H."/>
            <person name="Richardson C.C."/>
        </authorList>
    </citation>
    <scope>FUNCTION</scope>
</reference>
<reference key="4">
    <citation type="journal article" date="2009" name="Methods Mol. Biol.">
        <title>Determining DNA packaging strategy by analysis of the termini of the chromosomes in tailed-bacteriophage virions.</title>
        <authorList>
            <person name="Casjens S.R."/>
            <person name="Gilcrease E.B."/>
        </authorList>
    </citation>
    <scope>REVIEW</scope>
</reference>
<reference key="5">
    <citation type="journal article" date="2021" name="Virology">
        <title>The coevolution of large and small terminases of bacteriophages is a result of purifying selection leading to phenotypic stabilization.</title>
        <authorList>
            <person name="Wangchuk J."/>
            <person name="Chatterjee A."/>
            <person name="Patil S."/>
            <person name="Madugula S.K."/>
            <person name="Kondabagil K."/>
        </authorList>
    </citation>
    <scope>DOMAIN</scope>
</reference>
<accession>P03693</accession>
<keyword id="KW-0238">DNA-binding</keyword>
<keyword id="KW-1185">Reference proteome</keyword>
<keyword id="KW-0231">Viral genome packaging</keyword>
<keyword id="KW-1188">Viral release from host cell</keyword>
<proteinExistence type="evidence at protein level"/>
<gene>
    <name type="ordered locus">18</name>
</gene>
<comment type="function">
    <text evidence="2 3">Plays a role in packaging a single copy of genome into the prohead. The terminase is composed of two subunits (a large and a small) and the small subunit recognizes a specific sequence in the viral DNA. Once the DNA is packaged, the terminase detaches from the connector and the tail replaces it to finish maturation of the virion. Packaging initiates by TerS recognizing the packaging sequence in the viral DNA. The nuclease activity of TerL cuts the viral DNA and the terminase-DNA complex binds to the portal of a procapsid shell. DNA is translocated into the capsid, powered by the packaging ATPase in TerL, which continues until the next site is encountered at which point the motor stops and again cuts the DNA to release the nucleocapsid filled with a unit-length genome ('unit length' packaging) (PubMed:19082553, PubMed:3298244). Direct short terminal repeats at each end of the genome are duplicated in concert with packaging (PubMed:19082553).</text>
</comment>
<comment type="subunit">
    <text evidence="1">Homooctamer (Probable). Interacts with the terminase large subunit gp19; the active complex is probably heterooligomeric.</text>
</comment>
<comment type="domain">
    <text evidence="5">The N-terminus contains a helix-turn-helix (HTH) doamin that is involved in viral DNA binding.</text>
</comment>
<comment type="similarity">
    <text evidence="4">Belongs to the terminase small subunit family.</text>
</comment>
<sequence length="89" mass="10146">MEKDKSLITFLEMLDTAMAQRMLADLSDHERRSPQLYNAINKLLDRHKFQIGKLQPDVHILGGLAGALEEYKEKVGDNGLTDDDIYTLQ</sequence>